<accession>Q1Q9X2</accession>
<keyword id="KW-0687">Ribonucleoprotein</keyword>
<keyword id="KW-0689">Ribosomal protein</keyword>
<protein>
    <recommendedName>
        <fullName evidence="1">Large ribosomal subunit protein bL27</fullName>
    </recommendedName>
    <alternativeName>
        <fullName evidence="3">50S ribosomal protein L27</fullName>
    </alternativeName>
</protein>
<dbReference type="EMBL" id="CP000323">
    <property type="protein sequence ID" value="ABE75531.1"/>
    <property type="molecule type" value="Genomic_DNA"/>
</dbReference>
<dbReference type="RefSeq" id="WP_010199200.1">
    <property type="nucleotide sequence ID" value="NC_007969.1"/>
</dbReference>
<dbReference type="SMR" id="Q1Q9X2"/>
<dbReference type="STRING" id="335284.Pcryo_1754"/>
<dbReference type="KEGG" id="pcr:Pcryo_1754"/>
<dbReference type="eggNOG" id="COG0211">
    <property type="taxonomic scope" value="Bacteria"/>
</dbReference>
<dbReference type="HOGENOM" id="CLU_095424_4_1_6"/>
<dbReference type="Proteomes" id="UP000002425">
    <property type="component" value="Chromosome"/>
</dbReference>
<dbReference type="GO" id="GO:0022625">
    <property type="term" value="C:cytosolic large ribosomal subunit"/>
    <property type="evidence" value="ECO:0007669"/>
    <property type="project" value="TreeGrafter"/>
</dbReference>
<dbReference type="GO" id="GO:0003735">
    <property type="term" value="F:structural constituent of ribosome"/>
    <property type="evidence" value="ECO:0007669"/>
    <property type="project" value="InterPro"/>
</dbReference>
<dbReference type="GO" id="GO:0006412">
    <property type="term" value="P:translation"/>
    <property type="evidence" value="ECO:0007669"/>
    <property type="project" value="UniProtKB-UniRule"/>
</dbReference>
<dbReference type="FunFam" id="2.40.50.100:FF:000020">
    <property type="entry name" value="50S ribosomal protein L27"/>
    <property type="match status" value="1"/>
</dbReference>
<dbReference type="Gene3D" id="2.40.50.100">
    <property type="match status" value="1"/>
</dbReference>
<dbReference type="HAMAP" id="MF_00539">
    <property type="entry name" value="Ribosomal_bL27"/>
    <property type="match status" value="1"/>
</dbReference>
<dbReference type="InterPro" id="IPR001684">
    <property type="entry name" value="Ribosomal_bL27"/>
</dbReference>
<dbReference type="InterPro" id="IPR018261">
    <property type="entry name" value="Ribosomal_bL27_CS"/>
</dbReference>
<dbReference type="NCBIfam" id="TIGR00062">
    <property type="entry name" value="L27"/>
    <property type="match status" value="1"/>
</dbReference>
<dbReference type="PANTHER" id="PTHR15893:SF0">
    <property type="entry name" value="LARGE RIBOSOMAL SUBUNIT PROTEIN BL27M"/>
    <property type="match status" value="1"/>
</dbReference>
<dbReference type="PANTHER" id="PTHR15893">
    <property type="entry name" value="RIBOSOMAL PROTEIN L27"/>
    <property type="match status" value="1"/>
</dbReference>
<dbReference type="Pfam" id="PF01016">
    <property type="entry name" value="Ribosomal_L27"/>
    <property type="match status" value="1"/>
</dbReference>
<dbReference type="PRINTS" id="PR00063">
    <property type="entry name" value="RIBOSOMALL27"/>
</dbReference>
<dbReference type="SUPFAM" id="SSF110324">
    <property type="entry name" value="Ribosomal L27 protein-like"/>
    <property type="match status" value="1"/>
</dbReference>
<dbReference type="PROSITE" id="PS00831">
    <property type="entry name" value="RIBOSOMAL_L27"/>
    <property type="match status" value="1"/>
</dbReference>
<reference key="1">
    <citation type="submission" date="2006-03" db="EMBL/GenBank/DDBJ databases">
        <title>Complete sequence of chromosome of Psychrobacter cryohalolentis K5.</title>
        <authorList>
            <consortium name="US DOE Joint Genome Institute"/>
            <person name="Copeland A."/>
            <person name="Lucas S."/>
            <person name="Lapidus A."/>
            <person name="Barry K."/>
            <person name="Detter J.C."/>
            <person name="Glavina T."/>
            <person name="Hammon N."/>
            <person name="Israni S."/>
            <person name="Dalin E."/>
            <person name="Tice H."/>
            <person name="Pitluck S."/>
            <person name="Brettin T."/>
            <person name="Bruce D."/>
            <person name="Han C."/>
            <person name="Tapia R."/>
            <person name="Sims D.R."/>
            <person name="Gilna P."/>
            <person name="Schmutz J."/>
            <person name="Larimer F."/>
            <person name="Land M."/>
            <person name="Hauser L."/>
            <person name="Kyrpides N."/>
            <person name="Kim E."/>
            <person name="Richardson P."/>
        </authorList>
    </citation>
    <scope>NUCLEOTIDE SEQUENCE [LARGE SCALE GENOMIC DNA]</scope>
    <source>
        <strain>ATCC BAA-1226 / DSM 17306 / VKM B-2378 / K5</strain>
    </source>
</reference>
<feature type="chain" id="PRO_1000017568" description="Large ribosomal subunit protein bL27">
    <location>
        <begin position="1"/>
        <end position="85"/>
    </location>
</feature>
<feature type="region of interest" description="Disordered" evidence="2">
    <location>
        <begin position="1"/>
        <end position="20"/>
    </location>
</feature>
<evidence type="ECO:0000255" key="1">
    <source>
        <dbReference type="HAMAP-Rule" id="MF_00539"/>
    </source>
</evidence>
<evidence type="ECO:0000256" key="2">
    <source>
        <dbReference type="SAM" id="MobiDB-lite"/>
    </source>
</evidence>
<evidence type="ECO:0000305" key="3"/>
<gene>
    <name evidence="1" type="primary">rpmA</name>
    <name type="ordered locus">Pcryo_1754</name>
</gene>
<sequence>MAHKKAAGSSRNGRDSNPKMLGVKIFGGQAIVAGNIIVRQRGTEFHAGEGVGMGRDHTLFALNDGVVKFATKGKFNRRYVMVESA</sequence>
<comment type="similarity">
    <text evidence="1">Belongs to the bacterial ribosomal protein bL27 family.</text>
</comment>
<name>RL27_PSYCK</name>
<proteinExistence type="inferred from homology"/>
<organism>
    <name type="scientific">Psychrobacter cryohalolentis (strain ATCC BAA-1226 / DSM 17306 / VKM B-2378 / K5)</name>
    <dbReference type="NCBI Taxonomy" id="335284"/>
    <lineage>
        <taxon>Bacteria</taxon>
        <taxon>Pseudomonadati</taxon>
        <taxon>Pseudomonadota</taxon>
        <taxon>Gammaproteobacteria</taxon>
        <taxon>Moraxellales</taxon>
        <taxon>Moraxellaceae</taxon>
        <taxon>Psychrobacter</taxon>
    </lineage>
</organism>